<gene>
    <name evidence="1" type="primary">rplA</name>
    <name type="ordered locus">YPN_0216</name>
    <name type="ORF">YP516_0193</name>
</gene>
<organism>
    <name type="scientific">Yersinia pestis bv. Antiqua (strain Nepal516)</name>
    <dbReference type="NCBI Taxonomy" id="377628"/>
    <lineage>
        <taxon>Bacteria</taxon>
        <taxon>Pseudomonadati</taxon>
        <taxon>Pseudomonadota</taxon>
        <taxon>Gammaproteobacteria</taxon>
        <taxon>Enterobacterales</taxon>
        <taxon>Yersiniaceae</taxon>
        <taxon>Yersinia</taxon>
    </lineage>
</organism>
<evidence type="ECO:0000255" key="1">
    <source>
        <dbReference type="HAMAP-Rule" id="MF_01318"/>
    </source>
</evidence>
<evidence type="ECO:0000305" key="2"/>
<accession>Q1CN81</accession>
<accession>C4GNE3</accession>
<proteinExistence type="inferred from homology"/>
<protein>
    <recommendedName>
        <fullName evidence="1">Large ribosomal subunit protein uL1</fullName>
    </recommendedName>
    <alternativeName>
        <fullName evidence="2">50S ribosomal protein L1</fullName>
    </alternativeName>
</protein>
<feature type="chain" id="PRO_0000308141" description="Large ribosomal subunit protein uL1">
    <location>
        <begin position="1"/>
        <end position="234"/>
    </location>
</feature>
<name>RL1_YERPN</name>
<dbReference type="EMBL" id="CP000305">
    <property type="protein sequence ID" value="ABG16549.1"/>
    <property type="molecule type" value="Genomic_DNA"/>
</dbReference>
<dbReference type="EMBL" id="ACNQ01000004">
    <property type="protein sequence ID" value="EEO78467.1"/>
    <property type="molecule type" value="Genomic_DNA"/>
</dbReference>
<dbReference type="RefSeq" id="WP_002210673.1">
    <property type="nucleotide sequence ID" value="NZ_ACNQ01000004.1"/>
</dbReference>
<dbReference type="SMR" id="Q1CN81"/>
<dbReference type="GeneID" id="57974968"/>
<dbReference type="KEGG" id="ypn:YPN_0216"/>
<dbReference type="HOGENOM" id="CLU_062853_0_0_6"/>
<dbReference type="Proteomes" id="UP000008936">
    <property type="component" value="Chromosome"/>
</dbReference>
<dbReference type="GO" id="GO:0022625">
    <property type="term" value="C:cytosolic large ribosomal subunit"/>
    <property type="evidence" value="ECO:0007669"/>
    <property type="project" value="TreeGrafter"/>
</dbReference>
<dbReference type="GO" id="GO:0019843">
    <property type="term" value="F:rRNA binding"/>
    <property type="evidence" value="ECO:0007669"/>
    <property type="project" value="UniProtKB-UniRule"/>
</dbReference>
<dbReference type="GO" id="GO:0003735">
    <property type="term" value="F:structural constituent of ribosome"/>
    <property type="evidence" value="ECO:0007669"/>
    <property type="project" value="InterPro"/>
</dbReference>
<dbReference type="GO" id="GO:0000049">
    <property type="term" value="F:tRNA binding"/>
    <property type="evidence" value="ECO:0007669"/>
    <property type="project" value="UniProtKB-KW"/>
</dbReference>
<dbReference type="GO" id="GO:0006417">
    <property type="term" value="P:regulation of translation"/>
    <property type="evidence" value="ECO:0007669"/>
    <property type="project" value="UniProtKB-KW"/>
</dbReference>
<dbReference type="GO" id="GO:0006412">
    <property type="term" value="P:translation"/>
    <property type="evidence" value="ECO:0007669"/>
    <property type="project" value="UniProtKB-UniRule"/>
</dbReference>
<dbReference type="CDD" id="cd00403">
    <property type="entry name" value="Ribosomal_L1"/>
    <property type="match status" value="1"/>
</dbReference>
<dbReference type="FunFam" id="3.40.50.790:FF:000001">
    <property type="entry name" value="50S ribosomal protein L1"/>
    <property type="match status" value="1"/>
</dbReference>
<dbReference type="Gene3D" id="3.30.190.20">
    <property type="match status" value="1"/>
</dbReference>
<dbReference type="Gene3D" id="3.40.50.790">
    <property type="match status" value="1"/>
</dbReference>
<dbReference type="HAMAP" id="MF_01318_B">
    <property type="entry name" value="Ribosomal_uL1_B"/>
    <property type="match status" value="1"/>
</dbReference>
<dbReference type="InterPro" id="IPR005878">
    <property type="entry name" value="Ribosom_uL1_bac-type"/>
</dbReference>
<dbReference type="InterPro" id="IPR002143">
    <property type="entry name" value="Ribosomal_uL1"/>
</dbReference>
<dbReference type="InterPro" id="IPR023674">
    <property type="entry name" value="Ribosomal_uL1-like"/>
</dbReference>
<dbReference type="InterPro" id="IPR028364">
    <property type="entry name" value="Ribosomal_uL1/biogenesis"/>
</dbReference>
<dbReference type="InterPro" id="IPR016095">
    <property type="entry name" value="Ribosomal_uL1_3-a/b-sand"/>
</dbReference>
<dbReference type="InterPro" id="IPR023673">
    <property type="entry name" value="Ribosomal_uL1_CS"/>
</dbReference>
<dbReference type="NCBIfam" id="TIGR01169">
    <property type="entry name" value="rplA_bact"/>
    <property type="match status" value="1"/>
</dbReference>
<dbReference type="PANTHER" id="PTHR36427">
    <property type="entry name" value="54S RIBOSOMAL PROTEIN L1, MITOCHONDRIAL"/>
    <property type="match status" value="1"/>
</dbReference>
<dbReference type="PANTHER" id="PTHR36427:SF3">
    <property type="entry name" value="LARGE RIBOSOMAL SUBUNIT PROTEIN UL1M"/>
    <property type="match status" value="1"/>
</dbReference>
<dbReference type="Pfam" id="PF00687">
    <property type="entry name" value="Ribosomal_L1"/>
    <property type="match status" value="1"/>
</dbReference>
<dbReference type="PIRSF" id="PIRSF002155">
    <property type="entry name" value="Ribosomal_L1"/>
    <property type="match status" value="1"/>
</dbReference>
<dbReference type="SUPFAM" id="SSF56808">
    <property type="entry name" value="Ribosomal protein L1"/>
    <property type="match status" value="1"/>
</dbReference>
<dbReference type="PROSITE" id="PS01199">
    <property type="entry name" value="RIBOSOMAL_L1"/>
    <property type="match status" value="1"/>
</dbReference>
<sequence length="234" mass="24803">MAKLTKRMRVIRDKVDVTKQYDINEAVALLKELATAKFVESVDVAVNLGIDARKSDQNVRGATVLPHGTGRSVRVAVFAQGANAEAAKEAGAELVGMDDLADQIKKGEMNFDVVIASPDAMRVVGQLGQILGPRGLMPNPKVGTVTPNVAEAVKNAKAGQVRYRNDKNGIIHTTIGKVDFDSDKLKENLESLVVALKKAKPATAKGIYIKKISLSTTMGAGVAIDQSGLTAVVN</sequence>
<comment type="function">
    <text evidence="1">Binds directly to 23S rRNA. The L1 stalk is quite mobile in the ribosome, and is involved in E site tRNA release.</text>
</comment>
<comment type="function">
    <text evidence="1">Protein L1 is also a translational repressor protein, it controls the translation of the L11 operon by binding to its mRNA.</text>
</comment>
<comment type="subunit">
    <text evidence="1">Part of the 50S ribosomal subunit.</text>
</comment>
<comment type="similarity">
    <text evidence="1">Belongs to the universal ribosomal protein uL1 family.</text>
</comment>
<keyword id="KW-0678">Repressor</keyword>
<keyword id="KW-0687">Ribonucleoprotein</keyword>
<keyword id="KW-0689">Ribosomal protein</keyword>
<keyword id="KW-0694">RNA-binding</keyword>
<keyword id="KW-0699">rRNA-binding</keyword>
<keyword id="KW-0810">Translation regulation</keyword>
<keyword id="KW-0820">tRNA-binding</keyword>
<reference key="1">
    <citation type="journal article" date="2006" name="J. Bacteriol.">
        <title>Complete genome sequence of Yersinia pestis strains Antiqua and Nepal516: evidence of gene reduction in an emerging pathogen.</title>
        <authorList>
            <person name="Chain P.S.G."/>
            <person name="Hu P."/>
            <person name="Malfatti S.A."/>
            <person name="Radnedge L."/>
            <person name="Larimer F."/>
            <person name="Vergez L.M."/>
            <person name="Worsham P."/>
            <person name="Chu M.C."/>
            <person name="Andersen G.L."/>
        </authorList>
    </citation>
    <scope>NUCLEOTIDE SEQUENCE [LARGE SCALE GENOMIC DNA]</scope>
    <source>
        <strain>Nepal516</strain>
    </source>
</reference>
<reference key="2">
    <citation type="submission" date="2009-04" db="EMBL/GenBank/DDBJ databases">
        <title>Yersinia pestis Nepal516A whole genome shotgun sequencing project.</title>
        <authorList>
            <person name="Plunkett G. III"/>
            <person name="Anderson B.D."/>
            <person name="Baumler D.J."/>
            <person name="Burland V."/>
            <person name="Cabot E.L."/>
            <person name="Glasner J.D."/>
            <person name="Mau B."/>
            <person name="Neeno-Eckwall E."/>
            <person name="Perna N.T."/>
            <person name="Munk A.C."/>
            <person name="Tapia R."/>
            <person name="Green L.D."/>
            <person name="Rogers Y.C."/>
            <person name="Detter J.C."/>
            <person name="Bruce D.C."/>
            <person name="Brettin T.S."/>
        </authorList>
    </citation>
    <scope>NUCLEOTIDE SEQUENCE [LARGE SCALE GENOMIC DNA]</scope>
    <source>
        <strain>Nepal516</strain>
    </source>
</reference>